<dbReference type="EMBL" id="AC016829">
    <property type="protein sequence ID" value="AAF26797.1"/>
    <property type="molecule type" value="Genomic_DNA"/>
</dbReference>
<dbReference type="EMBL" id="CP002686">
    <property type="protein sequence ID" value="AEE74045.1"/>
    <property type="molecule type" value="Genomic_DNA"/>
</dbReference>
<dbReference type="EMBL" id="CP002686">
    <property type="protein sequence ID" value="AEE74046.1"/>
    <property type="molecule type" value="Genomic_DNA"/>
</dbReference>
<dbReference type="EMBL" id="CP002686">
    <property type="protein sequence ID" value="ANM64538.1"/>
    <property type="molecule type" value="Genomic_DNA"/>
</dbReference>
<dbReference type="RefSeq" id="NP_001189804.1">
    <molecule id="Q9M8X2-2"/>
    <property type="nucleotide sequence ID" value="NM_001202875.1"/>
</dbReference>
<dbReference type="RefSeq" id="NP_001326557.1">
    <molecule id="Q9M8X2-1"/>
    <property type="nucleotide sequence ID" value="NM_001337505.1"/>
</dbReference>
<dbReference type="RefSeq" id="NP_187066.1">
    <molecule id="Q9M8X2-1"/>
    <property type="nucleotide sequence ID" value="NM_111287.3"/>
</dbReference>
<dbReference type="SMR" id="Q9M8X2"/>
<dbReference type="FunCoup" id="Q9M8X2">
    <property type="interactions" value="2798"/>
</dbReference>
<dbReference type="STRING" id="3702.Q9M8X2"/>
<dbReference type="iPTMnet" id="Q9M8X2"/>
<dbReference type="PaxDb" id="3702-AT3G04160.2"/>
<dbReference type="ProteomicsDB" id="242605">
    <molecule id="Q9M8X2-1"/>
</dbReference>
<dbReference type="EnsemblPlants" id="AT3G04160.1">
    <molecule id="Q9M8X2-1"/>
    <property type="protein sequence ID" value="AT3G04160.1"/>
    <property type="gene ID" value="AT3G04160"/>
</dbReference>
<dbReference type="EnsemblPlants" id="AT3G04160.2">
    <molecule id="Q9M8X2-2"/>
    <property type="protein sequence ID" value="AT3G04160.2"/>
    <property type="gene ID" value="AT3G04160"/>
</dbReference>
<dbReference type="EnsemblPlants" id="AT3G04160.3">
    <molecule id="Q9M8X2-1"/>
    <property type="protein sequence ID" value="AT3G04160.3"/>
    <property type="gene ID" value="AT3G04160"/>
</dbReference>
<dbReference type="GeneID" id="819571"/>
<dbReference type="Gramene" id="AT3G04160.1">
    <molecule id="Q9M8X2-1"/>
    <property type="protein sequence ID" value="AT3G04160.1"/>
    <property type="gene ID" value="AT3G04160"/>
</dbReference>
<dbReference type="Gramene" id="AT3G04160.2">
    <molecule id="Q9M8X2-2"/>
    <property type="protein sequence ID" value="AT3G04160.2"/>
    <property type="gene ID" value="AT3G04160"/>
</dbReference>
<dbReference type="Gramene" id="AT3G04160.3">
    <molecule id="Q9M8X2-1"/>
    <property type="protein sequence ID" value="AT3G04160.3"/>
    <property type="gene ID" value="AT3G04160"/>
</dbReference>
<dbReference type="KEGG" id="ath:AT3G04160"/>
<dbReference type="Araport" id="AT3G04160"/>
<dbReference type="TAIR" id="AT3G04160"/>
<dbReference type="eggNOG" id="ENOG502QSM9">
    <property type="taxonomic scope" value="Eukaryota"/>
</dbReference>
<dbReference type="HOGENOM" id="CLU_367008_0_0_1"/>
<dbReference type="InParanoid" id="Q9M8X2"/>
<dbReference type="OMA" id="MRYMIED"/>
<dbReference type="PhylomeDB" id="Q9M8X2"/>
<dbReference type="PRO" id="PR:Q9M8X2"/>
<dbReference type="Proteomes" id="UP000006548">
    <property type="component" value="Chromosome 3"/>
</dbReference>
<dbReference type="ExpressionAtlas" id="Q9M8X2">
    <property type="expression patterns" value="baseline and differential"/>
</dbReference>
<dbReference type="GO" id="GO:0005681">
    <property type="term" value="C:spliceosomal complex"/>
    <property type="evidence" value="ECO:0007669"/>
    <property type="project" value="UniProtKB-KW"/>
</dbReference>
<dbReference type="GO" id="GO:0008270">
    <property type="term" value="F:zinc ion binding"/>
    <property type="evidence" value="ECO:0007669"/>
    <property type="project" value="UniProtKB-KW"/>
</dbReference>
<dbReference type="GO" id="GO:0006397">
    <property type="term" value="P:mRNA processing"/>
    <property type="evidence" value="ECO:0007669"/>
    <property type="project" value="UniProtKB-KW"/>
</dbReference>
<dbReference type="GO" id="GO:0008380">
    <property type="term" value="P:RNA splicing"/>
    <property type="evidence" value="ECO:0007669"/>
    <property type="project" value="UniProtKB-KW"/>
</dbReference>
<dbReference type="InterPro" id="IPR022776">
    <property type="entry name" value="TRM13/UPF0224_CHHC_Znf_dom"/>
</dbReference>
<dbReference type="InterPro" id="IPR051591">
    <property type="entry name" value="UPF0224_FAM112_RNA_Proc"/>
</dbReference>
<dbReference type="PANTHER" id="PTHR21402">
    <property type="entry name" value="GAMETOCYTE SPECIFIC FACTOR 1-RELATED"/>
    <property type="match status" value="1"/>
</dbReference>
<dbReference type="PANTHER" id="PTHR21402:SF10">
    <property type="entry name" value="U11_U12 SMALL NUCLEAR RIBONUCLEOPROTEIN 48 KDA PROTEIN"/>
    <property type="match status" value="1"/>
</dbReference>
<dbReference type="Pfam" id="PF05253">
    <property type="entry name" value="zf-U11-48K"/>
    <property type="match status" value="1"/>
</dbReference>
<dbReference type="PROSITE" id="PS51800">
    <property type="entry name" value="ZF_CHHC_U11_48K"/>
    <property type="match status" value="1"/>
</dbReference>
<gene>
    <name type="primary">SNRNP48</name>
    <name type="ordered locus">At3g04160</name>
    <name type="ORF">T6K12.22</name>
</gene>
<evidence type="ECO:0000250" key="1"/>
<evidence type="ECO:0000255" key="2">
    <source>
        <dbReference type="PROSITE-ProRule" id="PRU01141"/>
    </source>
</evidence>
<evidence type="ECO:0000256" key="3">
    <source>
        <dbReference type="SAM" id="MobiDB-lite"/>
    </source>
</evidence>
<evidence type="ECO:0000305" key="4"/>
<accession>Q9M8X2</accession>
<accession>F4J3L0</accession>
<reference key="1">
    <citation type="journal article" date="2000" name="Nature">
        <title>Sequence and analysis of chromosome 3 of the plant Arabidopsis thaliana.</title>
        <authorList>
            <person name="Salanoubat M."/>
            <person name="Lemcke K."/>
            <person name="Rieger M."/>
            <person name="Ansorge W."/>
            <person name="Unseld M."/>
            <person name="Fartmann B."/>
            <person name="Valle G."/>
            <person name="Bloecker H."/>
            <person name="Perez-Alonso M."/>
            <person name="Obermaier B."/>
            <person name="Delseny M."/>
            <person name="Boutry M."/>
            <person name="Grivell L.A."/>
            <person name="Mache R."/>
            <person name="Puigdomenech P."/>
            <person name="De Simone V."/>
            <person name="Choisne N."/>
            <person name="Artiguenave F."/>
            <person name="Robert C."/>
            <person name="Brottier P."/>
            <person name="Wincker P."/>
            <person name="Cattolico L."/>
            <person name="Weissenbach J."/>
            <person name="Saurin W."/>
            <person name="Quetier F."/>
            <person name="Schaefer M."/>
            <person name="Mueller-Auer S."/>
            <person name="Gabel C."/>
            <person name="Fuchs M."/>
            <person name="Benes V."/>
            <person name="Wurmbach E."/>
            <person name="Drzonek H."/>
            <person name="Erfle H."/>
            <person name="Jordan N."/>
            <person name="Bangert S."/>
            <person name="Wiedelmann R."/>
            <person name="Kranz H."/>
            <person name="Voss H."/>
            <person name="Holland R."/>
            <person name="Brandt P."/>
            <person name="Nyakatura G."/>
            <person name="Vezzi A."/>
            <person name="D'Angelo M."/>
            <person name="Pallavicini A."/>
            <person name="Toppo S."/>
            <person name="Simionati B."/>
            <person name="Conrad A."/>
            <person name="Hornischer K."/>
            <person name="Kauer G."/>
            <person name="Loehnert T.-H."/>
            <person name="Nordsiek G."/>
            <person name="Reichelt J."/>
            <person name="Scharfe M."/>
            <person name="Schoen O."/>
            <person name="Bargues M."/>
            <person name="Terol J."/>
            <person name="Climent J."/>
            <person name="Navarro P."/>
            <person name="Collado C."/>
            <person name="Perez-Perez A."/>
            <person name="Ottenwaelder B."/>
            <person name="Duchemin D."/>
            <person name="Cooke R."/>
            <person name="Laudie M."/>
            <person name="Berger-Llauro C."/>
            <person name="Purnelle B."/>
            <person name="Masuy D."/>
            <person name="de Haan M."/>
            <person name="Maarse A.C."/>
            <person name="Alcaraz J.-P."/>
            <person name="Cottet A."/>
            <person name="Casacuberta E."/>
            <person name="Monfort A."/>
            <person name="Argiriou A."/>
            <person name="Flores M."/>
            <person name="Liguori R."/>
            <person name="Vitale D."/>
            <person name="Mannhaupt G."/>
            <person name="Haase D."/>
            <person name="Schoof H."/>
            <person name="Rudd S."/>
            <person name="Zaccaria P."/>
            <person name="Mewes H.-W."/>
            <person name="Mayer K.F.X."/>
            <person name="Kaul S."/>
            <person name="Town C.D."/>
            <person name="Koo H.L."/>
            <person name="Tallon L.J."/>
            <person name="Jenkins J."/>
            <person name="Rooney T."/>
            <person name="Rizzo M."/>
            <person name="Walts A."/>
            <person name="Utterback T."/>
            <person name="Fujii C.Y."/>
            <person name="Shea T.P."/>
            <person name="Creasy T.H."/>
            <person name="Haas B."/>
            <person name="Maiti R."/>
            <person name="Wu D."/>
            <person name="Peterson J."/>
            <person name="Van Aken S."/>
            <person name="Pai G."/>
            <person name="Militscher J."/>
            <person name="Sellers P."/>
            <person name="Gill J.E."/>
            <person name="Feldblyum T.V."/>
            <person name="Preuss D."/>
            <person name="Lin X."/>
            <person name="Nierman W.C."/>
            <person name="Salzberg S.L."/>
            <person name="White O."/>
            <person name="Venter J.C."/>
            <person name="Fraser C.M."/>
            <person name="Kaneko T."/>
            <person name="Nakamura Y."/>
            <person name="Sato S."/>
            <person name="Kato T."/>
            <person name="Asamizu E."/>
            <person name="Sasamoto S."/>
            <person name="Kimura T."/>
            <person name="Idesawa K."/>
            <person name="Kawashima K."/>
            <person name="Kishida Y."/>
            <person name="Kiyokawa C."/>
            <person name="Kohara M."/>
            <person name="Matsumoto M."/>
            <person name="Matsuno A."/>
            <person name="Muraki A."/>
            <person name="Nakayama S."/>
            <person name="Nakazaki N."/>
            <person name="Shinpo S."/>
            <person name="Takeuchi C."/>
            <person name="Wada T."/>
            <person name="Watanabe A."/>
            <person name="Yamada M."/>
            <person name="Yasuda M."/>
            <person name="Tabata S."/>
        </authorList>
    </citation>
    <scope>NUCLEOTIDE SEQUENCE [LARGE SCALE GENOMIC DNA]</scope>
    <source>
        <strain>cv. Columbia</strain>
    </source>
</reference>
<reference key="2">
    <citation type="journal article" date="2017" name="Plant J.">
        <title>Araport11: a complete reannotation of the Arabidopsis thaliana reference genome.</title>
        <authorList>
            <person name="Cheng C.Y."/>
            <person name="Krishnakumar V."/>
            <person name="Chan A.P."/>
            <person name="Thibaud-Nissen F."/>
            <person name="Schobel S."/>
            <person name="Town C.D."/>
        </authorList>
    </citation>
    <scope>GENOME REANNOTATION</scope>
    <source>
        <strain>cv. Columbia</strain>
    </source>
</reference>
<reference key="3">
    <citation type="journal article" date="2005" name="RNA">
        <title>Evolutionary conservation of minor U12-type spliceosome between plants and humans.</title>
        <authorList>
            <person name="Lorkovic Z.J."/>
            <person name="Lehner R."/>
            <person name="Forstner C."/>
            <person name="Barta A."/>
        </authorList>
    </citation>
    <scope>IDENTIFICATION</scope>
</reference>
<protein>
    <recommendedName>
        <fullName>U11/U12 small nuclear ribonucleoprotein 48 kDa protein</fullName>
        <shortName>U11/U12 snRNP 48 kDa protein</shortName>
        <shortName>U11/U12-48K</shortName>
    </recommendedName>
</protein>
<proteinExistence type="inferred from homology"/>
<sequence length="712" mass="81967">MDRPPSLPHYQNPNPNLFYHYPPPNSNPNFFFRPPPPPLQNPNNYSIVPSPPPIRELSGTLSSLKSLLSECQRTLDSLSQNLALDHSSLLQKDENGCFVRCPFDSNHFMPPEALFLHSLRCPNTLDLIHLLESFSSYRNTLELPCELQLNNGDGDLCISLDDLADFGSNFFYRDCPGAVKFSELDGKKRTLTLPHVLSVECSDFVGSDEKVKKIVLDKCLGVLPSDLCAMKNEIDQWRDFPSSYSSSVLSSIVGSKVVEISALRKWILVNSTRYGVIIDTFMRDHIFLLFRLCLKSAVKEACGFRMESDATDVGEQKIMSCKSSTFECPVFIQVLSWLASQLAVLYGEGNGKFFALDMFKQCIVESASQVMLFRLEGTRSKCSGVVEDLDDARLRNKDVIMEKPFENSSGGECGKTLDSPQVISVSRVSAAVAALYERSLLEEKIRAVRYAQPLTRYQRAAELGFMTAKADEERNRRCSYRPIIDHDGRPRQRSLNQDMDKMKTREELLAEERDYKRRRMSYRGKKVKRTPRQVLHDMIEEYTEEIKLAGGIGCFEKGMPLQSRSPIGNDQKESDFGYSIPSTDKQWKGENRADIEYPIDNRQNSDKVKRHDEYDSGSSQRQQSHRSYKHSDRRDDKLRDRRKDKHNDRRDDEFTRTKRHSIEGESYQNYRSSREKSSSDYKTKRDDPYDRRSQQPRNQNLFEDRYIPTEKE</sequence>
<keyword id="KW-0025">Alternative splicing</keyword>
<keyword id="KW-0479">Metal-binding</keyword>
<keyword id="KW-0507">mRNA processing</keyword>
<keyword id="KW-0508">mRNA splicing</keyword>
<keyword id="KW-0539">Nucleus</keyword>
<keyword id="KW-1185">Reference proteome</keyword>
<keyword id="KW-0687">Ribonucleoprotein</keyword>
<keyword id="KW-0747">Spliceosome</keyword>
<keyword id="KW-0862">Zinc</keyword>
<keyword id="KW-0863">Zinc-finger</keyword>
<feature type="chain" id="PRO_0000429829" description="U11/U12 small nuclear ribonucleoprotein 48 kDa protein">
    <location>
        <begin position="1"/>
        <end position="712"/>
    </location>
</feature>
<feature type="zinc finger region" description="CHHC U11-48K-type" evidence="2">
    <location>
        <begin position="98"/>
        <end position="125"/>
    </location>
</feature>
<feature type="region of interest" description="Disordered" evidence="3">
    <location>
        <begin position="562"/>
        <end position="712"/>
    </location>
</feature>
<feature type="compositionally biased region" description="Basic and acidic residues" evidence="3">
    <location>
        <begin position="585"/>
        <end position="595"/>
    </location>
</feature>
<feature type="compositionally biased region" description="Basic and acidic residues" evidence="3">
    <location>
        <begin position="603"/>
        <end position="614"/>
    </location>
</feature>
<feature type="compositionally biased region" description="Basic and acidic residues" evidence="3">
    <location>
        <begin position="629"/>
        <end position="663"/>
    </location>
</feature>
<feature type="compositionally biased region" description="Basic and acidic residues" evidence="3">
    <location>
        <begin position="672"/>
        <end position="693"/>
    </location>
</feature>
<feature type="compositionally biased region" description="Basic and acidic residues" evidence="3">
    <location>
        <begin position="702"/>
        <end position="712"/>
    </location>
</feature>
<feature type="binding site" evidence="2">
    <location>
        <position position="101"/>
    </location>
    <ligand>
        <name>Zn(2+)</name>
        <dbReference type="ChEBI" id="CHEBI:29105"/>
    </ligand>
</feature>
<feature type="binding site" evidence="2">
    <location>
        <position position="107"/>
    </location>
    <ligand>
        <name>Zn(2+)</name>
        <dbReference type="ChEBI" id="CHEBI:29105"/>
    </ligand>
</feature>
<feature type="binding site" evidence="2">
    <location>
        <position position="117"/>
    </location>
    <ligand>
        <name>Zn(2+)</name>
        <dbReference type="ChEBI" id="CHEBI:29105"/>
    </ligand>
</feature>
<feature type="binding site" evidence="2">
    <location>
        <position position="121"/>
    </location>
    <ligand>
        <name>Zn(2+)</name>
        <dbReference type="ChEBI" id="CHEBI:29105"/>
    </ligand>
</feature>
<feature type="splice variant" id="VSP_055299" description="In isoform 2." evidence="4">
    <original>AAELGFMTAKADE</original>
    <variation>IISCLHLSLIPHDVS</variation>
    <location>
        <begin position="460"/>
        <end position="472"/>
    </location>
</feature>
<comment type="function">
    <text evidence="1">Likely involved in U12-type 5' splice site recognition.</text>
</comment>
<comment type="subunit">
    <text evidence="1">Component of the U11/U12 snRNPs that are part of the U12-type spliceosome. Not found in the major spliceosome (By similarity).</text>
</comment>
<comment type="subcellular location">
    <subcellularLocation>
        <location evidence="1">Nucleus</location>
    </subcellularLocation>
</comment>
<comment type="alternative products">
    <event type="alternative splicing"/>
    <isoform>
        <id>Q9M8X2-1</id>
        <name>1</name>
        <sequence type="displayed"/>
    </isoform>
    <isoform>
        <id>Q9M8X2-2</id>
        <name>2</name>
        <sequence type="described" ref="VSP_055299"/>
    </isoform>
</comment>
<comment type="domain">
    <text evidence="1">The CHHC region interacts with the 5' splice site of the U12-type intron.</text>
</comment>
<name>U1148_ARATH</name>
<organism>
    <name type="scientific">Arabidopsis thaliana</name>
    <name type="common">Mouse-ear cress</name>
    <dbReference type="NCBI Taxonomy" id="3702"/>
    <lineage>
        <taxon>Eukaryota</taxon>
        <taxon>Viridiplantae</taxon>
        <taxon>Streptophyta</taxon>
        <taxon>Embryophyta</taxon>
        <taxon>Tracheophyta</taxon>
        <taxon>Spermatophyta</taxon>
        <taxon>Magnoliopsida</taxon>
        <taxon>eudicotyledons</taxon>
        <taxon>Gunneridae</taxon>
        <taxon>Pentapetalae</taxon>
        <taxon>rosids</taxon>
        <taxon>malvids</taxon>
        <taxon>Brassicales</taxon>
        <taxon>Brassicaceae</taxon>
        <taxon>Camelineae</taxon>
        <taxon>Arabidopsis</taxon>
    </lineage>
</organism>